<reference key="1">
    <citation type="submission" date="2003-01" db="EMBL/GenBank/DDBJ databases">
        <authorList>
            <consortium name="NIH - Zebrafish Gene Collection (ZGC) project"/>
        </authorList>
    </citation>
    <scope>NUCLEOTIDE SEQUENCE [LARGE SCALE MRNA]</scope>
    <source>
        <strain>AB</strain>
    </source>
</reference>
<reference key="2">
    <citation type="journal article" date="2011" name="Science">
        <title>Structures of SAS-6 suggest its organization in centrioles.</title>
        <authorList>
            <person name="van Breugel M."/>
            <person name="Hirono M."/>
            <person name="Andreeva A."/>
            <person name="Yanagisawa H.A."/>
            <person name="Yamaguchi S."/>
            <person name="Nakazawa Y."/>
            <person name="Morgner N."/>
            <person name="Petrovich M."/>
            <person name="Ebong I.O."/>
            <person name="Robinson C.V."/>
            <person name="Johnson C.M."/>
            <person name="Veprintsev D."/>
            <person name="Zuber B."/>
        </authorList>
    </citation>
    <scope>X-RAY CRYSTALLOGRAPHY (1.98 ANGSTROMS) OF 1-179</scope>
    <scope>FUNCTION</scope>
    <scope>SUBCELLULAR LOCATION</scope>
    <scope>SUBUNIT</scope>
    <scope>DOMAIN</scope>
</reference>
<feature type="chain" id="PRO_0000189975" description="Spindle assembly abnormal protein 6 homolog">
    <location>
        <begin position="1"/>
        <end position="627"/>
    </location>
</feature>
<feature type="domain" description="PISA">
    <location>
        <begin position="39"/>
        <end position="91"/>
    </location>
</feature>
<feature type="region of interest" description="Disordered" evidence="4">
    <location>
        <begin position="187"/>
        <end position="257"/>
    </location>
</feature>
<feature type="region of interest" description="Disordered" evidence="4">
    <location>
        <begin position="561"/>
        <end position="586"/>
    </location>
</feature>
<feature type="coiled-coil region" evidence="3">
    <location>
        <begin position="153"/>
        <end position="473"/>
    </location>
</feature>
<feature type="compositionally biased region" description="Basic and acidic residues" evidence="4">
    <location>
        <begin position="191"/>
        <end position="201"/>
    </location>
</feature>
<feature type="compositionally biased region" description="Polar residues" evidence="4">
    <location>
        <begin position="202"/>
        <end position="213"/>
    </location>
</feature>
<feature type="compositionally biased region" description="Basic and acidic residues" evidence="4">
    <location>
        <begin position="214"/>
        <end position="226"/>
    </location>
</feature>
<feature type="compositionally biased region" description="Low complexity" evidence="4">
    <location>
        <begin position="229"/>
        <end position="238"/>
    </location>
</feature>
<feature type="strand" evidence="6">
    <location>
        <begin position="2"/>
        <end position="15"/>
    </location>
</feature>
<feature type="strand" evidence="6">
    <location>
        <begin position="17"/>
        <end position="19"/>
    </location>
</feature>
<feature type="strand" evidence="6">
    <location>
        <begin position="22"/>
        <end position="33"/>
    </location>
</feature>
<feature type="strand" evidence="7">
    <location>
        <begin position="36"/>
        <end position="40"/>
    </location>
</feature>
<feature type="strand" evidence="6">
    <location>
        <begin position="43"/>
        <end position="50"/>
    </location>
</feature>
<feature type="strand" evidence="6">
    <location>
        <begin position="53"/>
        <end position="62"/>
    </location>
</feature>
<feature type="helix" evidence="6">
    <location>
        <begin position="64"/>
        <end position="74"/>
    </location>
</feature>
<feature type="helix" evidence="6">
    <location>
        <begin position="80"/>
        <end position="82"/>
    </location>
</feature>
<feature type="helix" evidence="6">
    <location>
        <begin position="83"/>
        <end position="97"/>
    </location>
</feature>
<feature type="strand" evidence="6">
    <location>
        <begin position="100"/>
        <end position="102"/>
    </location>
</feature>
<feature type="strand" evidence="6">
    <location>
        <begin position="104"/>
        <end position="110"/>
    </location>
</feature>
<feature type="strand" evidence="7">
    <location>
        <begin position="115"/>
        <end position="117"/>
    </location>
</feature>
<feature type="strand" evidence="6">
    <location>
        <begin position="121"/>
        <end position="127"/>
    </location>
</feature>
<feature type="strand" evidence="6">
    <location>
        <begin position="134"/>
        <end position="143"/>
    </location>
</feature>
<feature type="helix" evidence="6">
    <location>
        <begin position="146"/>
        <end position="153"/>
    </location>
</feature>
<feature type="helix" evidence="8">
    <location>
        <begin position="256"/>
        <end position="348"/>
    </location>
</feature>
<dbReference type="EMBL" id="BC045420">
    <property type="protein sequence ID" value="AAH45420.1"/>
    <property type="molecule type" value="mRNA"/>
</dbReference>
<dbReference type="RefSeq" id="NP_998603.1">
    <property type="nucleotide sequence ID" value="NM_213438.1"/>
</dbReference>
<dbReference type="PDB" id="2Y3V">
    <property type="method" value="X-ray"/>
    <property type="resolution" value="1.92 A"/>
    <property type="chains" value="A/B/C/D=1-156"/>
</dbReference>
<dbReference type="PDB" id="2Y3W">
    <property type="method" value="X-ray"/>
    <property type="resolution" value="1.98 A"/>
    <property type="chains" value="A/B/C=1-179"/>
</dbReference>
<dbReference type="PDB" id="6Z26">
    <property type="method" value="X-ray"/>
    <property type="resolution" value="2.32 A"/>
    <property type="chains" value="A/B/C/D=243-358"/>
</dbReference>
<dbReference type="PDBsum" id="2Y3V"/>
<dbReference type="PDBsum" id="2Y3W"/>
<dbReference type="PDBsum" id="6Z26"/>
<dbReference type="SMR" id="Q7ZVT3"/>
<dbReference type="ComplexPortal" id="CPX-1154">
    <property type="entry name" value="CPAP-STIL complex"/>
</dbReference>
<dbReference type="FunCoup" id="Q7ZVT3">
    <property type="interactions" value="506"/>
</dbReference>
<dbReference type="STRING" id="7955.ENSDARP00000075634"/>
<dbReference type="PaxDb" id="7955-ENSDARP00000075634"/>
<dbReference type="GeneID" id="406747"/>
<dbReference type="KEGG" id="dre:406747"/>
<dbReference type="AGR" id="ZFIN:ZDB-GENE-040426-2784"/>
<dbReference type="CTD" id="163786"/>
<dbReference type="ZFIN" id="ZDB-GENE-040426-2784">
    <property type="gene designation" value="sass6"/>
</dbReference>
<dbReference type="eggNOG" id="ENOG502QQ4W">
    <property type="taxonomic scope" value="Eukaryota"/>
</dbReference>
<dbReference type="InParanoid" id="Q7ZVT3"/>
<dbReference type="OrthoDB" id="49058at2759"/>
<dbReference type="PhylomeDB" id="Q7ZVT3"/>
<dbReference type="EvolutionaryTrace" id="Q7ZVT3"/>
<dbReference type="PRO" id="PR:Q7ZVT3"/>
<dbReference type="Proteomes" id="UP000000437">
    <property type="component" value="Chromosome 22"/>
</dbReference>
<dbReference type="GO" id="GO:0005814">
    <property type="term" value="C:centriole"/>
    <property type="evidence" value="ECO:0000250"/>
    <property type="project" value="UniProtKB"/>
</dbReference>
<dbReference type="GO" id="GO:0005813">
    <property type="term" value="C:centrosome"/>
    <property type="evidence" value="ECO:0000314"/>
    <property type="project" value="ZFIN"/>
</dbReference>
<dbReference type="GO" id="GO:0005737">
    <property type="term" value="C:cytoplasm"/>
    <property type="evidence" value="ECO:0000303"/>
    <property type="project" value="ComplexPortal"/>
</dbReference>
<dbReference type="GO" id="GO:0098536">
    <property type="term" value="C:deuterosome"/>
    <property type="evidence" value="ECO:0000250"/>
    <property type="project" value="UniProtKB"/>
</dbReference>
<dbReference type="GO" id="GO:0120099">
    <property type="term" value="C:procentriole replication complex"/>
    <property type="evidence" value="ECO:0000303"/>
    <property type="project" value="ComplexPortal"/>
</dbReference>
<dbReference type="GO" id="GO:0007099">
    <property type="term" value="P:centriole replication"/>
    <property type="evidence" value="ECO:0000250"/>
    <property type="project" value="UniProtKB"/>
</dbReference>
<dbReference type="GO" id="GO:0051298">
    <property type="term" value="P:centrosome duplication"/>
    <property type="evidence" value="ECO:0000315"/>
    <property type="project" value="ZFIN"/>
</dbReference>
<dbReference type="GO" id="GO:0040016">
    <property type="term" value="P:embryonic cleavage"/>
    <property type="evidence" value="ECO:0000315"/>
    <property type="project" value="ZFIN"/>
</dbReference>
<dbReference type="GO" id="GO:0007052">
    <property type="term" value="P:mitotic spindle organization"/>
    <property type="evidence" value="ECO:0000315"/>
    <property type="project" value="ZFIN"/>
</dbReference>
<dbReference type="GO" id="GO:0000280">
    <property type="term" value="P:nuclear division"/>
    <property type="evidence" value="ECO:0000315"/>
    <property type="project" value="ZFIN"/>
</dbReference>
<dbReference type="GO" id="GO:0046601">
    <property type="term" value="P:positive regulation of centriole replication"/>
    <property type="evidence" value="ECO:0000303"/>
    <property type="project" value="ComplexPortal"/>
</dbReference>
<dbReference type="GO" id="GO:1900087">
    <property type="term" value="P:positive regulation of G1/S transition of mitotic cell cycle"/>
    <property type="evidence" value="ECO:0000303"/>
    <property type="project" value="ComplexPortal"/>
</dbReference>
<dbReference type="GO" id="GO:0110028">
    <property type="term" value="P:positive regulation of mitotic spindle organization"/>
    <property type="evidence" value="ECO:0000303"/>
    <property type="project" value="ComplexPortal"/>
</dbReference>
<dbReference type="GO" id="GO:1905832">
    <property type="term" value="P:positive regulation of spindle assembly"/>
    <property type="evidence" value="ECO:0000303"/>
    <property type="project" value="ComplexPortal"/>
</dbReference>
<dbReference type="GO" id="GO:0007283">
    <property type="term" value="P:spermatogenesis"/>
    <property type="evidence" value="ECO:0000315"/>
    <property type="project" value="ZFIN"/>
</dbReference>
<dbReference type="CDD" id="cd10142">
    <property type="entry name" value="HD_SAS6_N"/>
    <property type="match status" value="1"/>
</dbReference>
<dbReference type="Gene3D" id="2.170.210.20">
    <property type="entry name" value="Spindle assembly abnormal protein 6, N-terminal domain"/>
    <property type="match status" value="1"/>
</dbReference>
<dbReference type="InterPro" id="IPR032396">
    <property type="entry name" value="SAS-6_N"/>
</dbReference>
<dbReference type="InterPro" id="IPR038558">
    <property type="entry name" value="SAS-6_N_sf"/>
</dbReference>
<dbReference type="InterPro" id="IPR041513">
    <property type="entry name" value="SAS6_CC"/>
</dbReference>
<dbReference type="PANTHER" id="PTHR44281">
    <property type="entry name" value="SPINDLE ASSEMBLY ABNORMAL PROTEIN 6 HOMOLOG"/>
    <property type="match status" value="1"/>
</dbReference>
<dbReference type="PANTHER" id="PTHR44281:SF4">
    <property type="entry name" value="SPINDLE ASSEMBLY ABNORMAL PROTEIN 6 HOMOLOG"/>
    <property type="match status" value="1"/>
</dbReference>
<dbReference type="Pfam" id="PF16531">
    <property type="entry name" value="SAS-6_N"/>
    <property type="match status" value="1"/>
</dbReference>
<dbReference type="Pfam" id="PF18594">
    <property type="entry name" value="Sas6_CC"/>
    <property type="match status" value="1"/>
</dbReference>
<protein>
    <recommendedName>
        <fullName>Spindle assembly abnormal protein 6 homolog</fullName>
    </recommendedName>
</protein>
<evidence type="ECO:0000250" key="1">
    <source>
        <dbReference type="UniProtKB" id="Q6NRG6"/>
    </source>
</evidence>
<evidence type="ECO:0000250" key="2">
    <source>
        <dbReference type="UniProtKB" id="Q6UVJ0"/>
    </source>
</evidence>
<evidence type="ECO:0000255" key="3"/>
<evidence type="ECO:0000256" key="4">
    <source>
        <dbReference type="SAM" id="MobiDB-lite"/>
    </source>
</evidence>
<evidence type="ECO:0000269" key="5">
    <source>
    </source>
</evidence>
<evidence type="ECO:0007829" key="6">
    <source>
        <dbReference type="PDB" id="2Y3V"/>
    </source>
</evidence>
<evidence type="ECO:0007829" key="7">
    <source>
        <dbReference type="PDB" id="2Y3W"/>
    </source>
</evidence>
<evidence type="ECO:0007829" key="8">
    <source>
        <dbReference type="PDB" id="6Z26"/>
    </source>
</evidence>
<name>SAS6_DANRE</name>
<organism>
    <name type="scientific">Danio rerio</name>
    <name type="common">Zebrafish</name>
    <name type="synonym">Brachydanio rerio</name>
    <dbReference type="NCBI Taxonomy" id="7955"/>
    <lineage>
        <taxon>Eukaryota</taxon>
        <taxon>Metazoa</taxon>
        <taxon>Chordata</taxon>
        <taxon>Craniata</taxon>
        <taxon>Vertebrata</taxon>
        <taxon>Euteleostomi</taxon>
        <taxon>Actinopterygii</taxon>
        <taxon>Neopterygii</taxon>
        <taxon>Teleostei</taxon>
        <taxon>Ostariophysi</taxon>
        <taxon>Cypriniformes</taxon>
        <taxon>Danionidae</taxon>
        <taxon>Danioninae</taxon>
        <taxon>Danio</taxon>
    </lineage>
</organism>
<sequence length="627" mass="71315">MTELLFNKRLQVLVKSKDTDERRSVIRVSIELQLPSSPVHRKDLVVRLTDDTDLYFLYNLIISEEDFQSLKVQQGLLIDFTSFPQKFIDLLEQCICEQDKESPRFLLQLSSSSSAFDHSPSNLNIVETNAFKHLTHLSLKLLPGSDTDIKKYLASCLSSVKEEKQQLQQKLRKTEEDLTRQLNYAQQTLSEKSRELDKLRSEWTSQTTSLSSRHMQDLTAEREKALETQSRLQQQNEQLRQELESSHHRSTQQLQTKVSELETANRELIDKKYKSDSTIRDLKAKLTSLEEECQRSKQQVLSLRRENSALDSECHEKERLLNQLQTRVAVLEQEIKDKDQLVLRTKEVLEATQQQKNSVEGNAESKQLQISKLESTVKSLSEELIKANGIIKKLQADLKALLGKIKVKNSVTVPQEKILQETSDKLQRQQRELQDTQQRLSLKEEEAAKLKEQLEATVQKLDESREVLKTNENVITWLNKQLNENQLSRKQETVAMFETPAAALRSAAVPHNMAFPITSTINSKYPLALSCVSSGSRSVLTSSNGPKVQFNPMSVKPSAAEVSPAAFSQPANKENSEPVGLDSKYFERRDDSIPLRGLLPSMHLNREVPKPLNTAAAKATPSAFFPG</sequence>
<comment type="function">
    <text evidence="2 5">Central scaffolding component of the centrioles ensuring their 9-fold symmetry (PubMed:21273447). Required for centrosome biogenesis and duplication: required both for mother-centriole-dependent centriole duplication and deuterosome-dependent centriole amplification in multiciliated cells (By similarity).</text>
</comment>
<comment type="subunit">
    <text evidence="5">Nine homodimers form a cartwheel structure with an internal diameter of 23 nM and radial spokes connecting to the microtubule triplets.</text>
</comment>
<comment type="subcellular location">
    <subcellularLocation>
        <location evidence="5">Cytoplasm</location>
        <location evidence="5">Cytoskeleton</location>
        <location evidence="5">Microtubule organizing center</location>
        <location evidence="5">Centrosome</location>
    </subcellularLocation>
    <text evidence="1">Component of the deuterosome, a structure that promotes de novo centriole amplification in multiciliated cells that can generate more than 100 centrioles.</text>
</comment>
<comment type="domain">
    <text evidence="5">The 35 nM long coiled-coil domain mediates homodimerization while the globular N-terminus links the dimers at an angle of 40 degrees to form the inner ring.</text>
</comment>
<keyword id="KW-0002">3D-structure</keyword>
<keyword id="KW-0131">Cell cycle</keyword>
<keyword id="KW-0175">Coiled coil</keyword>
<keyword id="KW-0963">Cytoplasm</keyword>
<keyword id="KW-0206">Cytoskeleton</keyword>
<keyword id="KW-1185">Reference proteome</keyword>
<accession>Q7ZVT3</accession>
<proteinExistence type="evidence at protein level"/>
<gene>
    <name type="primary">sass6</name>
    <name type="synonym">sas6</name>
    <name type="ORF">zgc:55668</name>
</gene>